<accession>Q2NKR1</accession>
<proteinExistence type="inferred from homology"/>
<organism>
    <name type="scientific">Bos taurus</name>
    <name type="common">Bovine</name>
    <dbReference type="NCBI Taxonomy" id="9913"/>
    <lineage>
        <taxon>Eukaryota</taxon>
        <taxon>Metazoa</taxon>
        <taxon>Chordata</taxon>
        <taxon>Craniata</taxon>
        <taxon>Vertebrata</taxon>
        <taxon>Euteleostomi</taxon>
        <taxon>Mammalia</taxon>
        <taxon>Eutheria</taxon>
        <taxon>Laurasiatheria</taxon>
        <taxon>Artiodactyla</taxon>
        <taxon>Ruminantia</taxon>
        <taxon>Pecora</taxon>
        <taxon>Bovidae</taxon>
        <taxon>Bovinae</taxon>
        <taxon>Bos</taxon>
    </lineage>
</organism>
<protein>
    <recommendedName>
        <fullName>Mitochondrial import inner membrane translocase subunit Tim10</fullName>
    </recommendedName>
</protein>
<comment type="function">
    <text evidence="1">Mitochondrial intermembrane chaperone that participates in the import and insertion of multi-pass transmembrane proteins into the mitochondrial inner membrane. May also be required for the transfer of beta-barrel precursors from the TOM complex to the sorting and assembly machinery (SAM complex) of the outer membrane. Acts as a chaperone-like protein that protects the hydrophobic precursors from aggregation and guide them through the mitochondrial intermembrane space (By similarity).</text>
</comment>
<comment type="subunit">
    <text evidence="1">Heterohexamer; composed of 3 copies of TIMM9 and 3 copies of TIMM10/TIM10A, named soluble 70 kDa complex. The complex forms a 6-bladed alpha-propeller structure and associates with the TIMM22 component of the TIM22 complex. Interacts with multi-pass transmembrane proteins in transit. Also forms a complex composed of TIMM9, TIMM10/TIM10A and FXC1/TIM10B (By similarity).</text>
</comment>
<comment type="subcellular location">
    <subcellularLocation>
        <location evidence="1">Mitochondrion inner membrane</location>
        <topology evidence="1">Peripheral membrane protein</topology>
        <orientation evidence="1">Intermembrane side</orientation>
    </subcellularLocation>
</comment>
<comment type="domain">
    <text evidence="1">The twin CX3C motif contains 4 conserved Cys residues that form 2 disulfide bonds in the mitochondrial intermembrane space. However, during the transit of TIMM10 from cytoplasm into mitochondrion, the Cys residues probably coordinate zinc, thereby preventing folding and allowing its transfer across mitochondrial outer membrane (By similarity).</text>
</comment>
<comment type="similarity">
    <text evidence="2">Belongs to the small Tim family.</text>
</comment>
<keyword id="KW-0143">Chaperone</keyword>
<keyword id="KW-1015">Disulfide bond</keyword>
<keyword id="KW-0472">Membrane</keyword>
<keyword id="KW-0479">Metal-binding</keyword>
<keyword id="KW-0496">Mitochondrion</keyword>
<keyword id="KW-0999">Mitochondrion inner membrane</keyword>
<keyword id="KW-0653">Protein transport</keyword>
<keyword id="KW-1185">Reference proteome</keyword>
<keyword id="KW-0811">Translocation</keyword>
<keyword id="KW-0813">Transport</keyword>
<keyword id="KW-0862">Zinc</keyword>
<reference key="1">
    <citation type="submission" date="2006-01" db="EMBL/GenBank/DDBJ databases">
        <authorList>
            <consortium name="NIH - Mammalian Gene Collection (MGC) project"/>
        </authorList>
    </citation>
    <scope>NUCLEOTIDE SEQUENCE [LARGE SCALE MRNA]</scope>
    <source>
        <strain>Hereford</strain>
        <tissue>Rumen</tissue>
    </source>
</reference>
<name>TIM10_BOVIN</name>
<gene>
    <name type="primary">TIMM10</name>
    <name type="synonym">TIM10</name>
</gene>
<sequence>MDPLRAQQLAAELEVEMMADMYNRMTSACHRKCVPPHYKEAELSKGESVCLDRCVSKYLDIHERMGKKLTELSMQDEELMKRAQQSSGPV</sequence>
<feature type="chain" id="PRO_0000228053" description="Mitochondrial import inner membrane translocase subunit Tim10">
    <location>
        <begin position="1"/>
        <end position="90"/>
    </location>
</feature>
<feature type="short sequence motif" description="Twin CX3C motif">
    <location>
        <begin position="29"/>
        <end position="54"/>
    </location>
</feature>
<feature type="disulfide bond" evidence="1">
    <location>
        <begin position="29"/>
        <end position="54"/>
    </location>
</feature>
<feature type="disulfide bond" evidence="1">
    <location>
        <begin position="33"/>
        <end position="50"/>
    </location>
</feature>
<dbReference type="EMBL" id="BC111687">
    <property type="protein sequence ID" value="AAI11688.1"/>
    <property type="molecule type" value="mRNA"/>
</dbReference>
<dbReference type="RefSeq" id="NP_001039597.1">
    <property type="nucleotide sequence ID" value="NM_001046132.2"/>
</dbReference>
<dbReference type="RefSeq" id="XP_005216592.1">
    <property type="nucleotide sequence ID" value="XM_005216535.4"/>
</dbReference>
<dbReference type="RefSeq" id="XP_005216594.1">
    <property type="nucleotide sequence ID" value="XM_005216537.5"/>
</dbReference>
<dbReference type="RefSeq" id="XP_005216595.1">
    <property type="nucleotide sequence ID" value="XM_005216538.5"/>
</dbReference>
<dbReference type="SMR" id="Q2NKR1"/>
<dbReference type="FunCoup" id="Q2NKR1">
    <property type="interactions" value="2612"/>
</dbReference>
<dbReference type="STRING" id="9913.ENSBTAP00000034279"/>
<dbReference type="PaxDb" id="9913-ENSBTAP00000034279"/>
<dbReference type="Ensembl" id="ENSBTAT00000034384.4">
    <property type="protein sequence ID" value="ENSBTAP00000034279.3"/>
    <property type="gene ID" value="ENSBTAG00000024701.4"/>
</dbReference>
<dbReference type="GeneID" id="512818"/>
<dbReference type="KEGG" id="bta:512818"/>
<dbReference type="CTD" id="26519"/>
<dbReference type="VEuPathDB" id="HostDB:ENSBTAG00000024701"/>
<dbReference type="VGNC" id="VGNC:97317">
    <property type="gene designation" value="TIMM10"/>
</dbReference>
<dbReference type="eggNOG" id="KOG3480">
    <property type="taxonomic scope" value="Eukaryota"/>
</dbReference>
<dbReference type="GeneTree" id="ENSGT00390000003068"/>
<dbReference type="HOGENOM" id="CLU_162151_2_0_1"/>
<dbReference type="InParanoid" id="Q2NKR1"/>
<dbReference type="OMA" id="VGENMQK"/>
<dbReference type="OrthoDB" id="274922at2759"/>
<dbReference type="TreeFam" id="TF106193"/>
<dbReference type="Reactome" id="R-BTA-1268020">
    <property type="pathway name" value="Mitochondrial protein import"/>
</dbReference>
<dbReference type="Proteomes" id="UP000009136">
    <property type="component" value="Chromosome 15"/>
</dbReference>
<dbReference type="Bgee" id="ENSBTAG00000024701">
    <property type="expression patterns" value="Expressed in tongue muscle and 104 other cell types or tissues"/>
</dbReference>
<dbReference type="GO" id="GO:0005743">
    <property type="term" value="C:mitochondrial inner membrane"/>
    <property type="evidence" value="ECO:0000318"/>
    <property type="project" value="GO_Central"/>
</dbReference>
<dbReference type="GO" id="GO:0042719">
    <property type="term" value="C:mitochondrial intermembrane space protein transporter complex"/>
    <property type="evidence" value="ECO:0007669"/>
    <property type="project" value="Ensembl"/>
</dbReference>
<dbReference type="GO" id="GO:0042721">
    <property type="term" value="C:TIM22 mitochondrial import inner membrane insertion complex"/>
    <property type="evidence" value="ECO:0007669"/>
    <property type="project" value="Ensembl"/>
</dbReference>
<dbReference type="GO" id="GO:0032977">
    <property type="term" value="F:membrane insertase activity"/>
    <property type="evidence" value="ECO:0007669"/>
    <property type="project" value="Ensembl"/>
</dbReference>
<dbReference type="GO" id="GO:0046872">
    <property type="term" value="F:metal ion binding"/>
    <property type="evidence" value="ECO:0007669"/>
    <property type="project" value="UniProtKB-KW"/>
</dbReference>
<dbReference type="GO" id="GO:0042803">
    <property type="term" value="F:protein homodimerization activity"/>
    <property type="evidence" value="ECO:0007669"/>
    <property type="project" value="Ensembl"/>
</dbReference>
<dbReference type="GO" id="GO:0051087">
    <property type="term" value="F:protein-folding chaperone binding"/>
    <property type="evidence" value="ECO:0007669"/>
    <property type="project" value="Ensembl"/>
</dbReference>
<dbReference type="GO" id="GO:0045039">
    <property type="term" value="P:protein insertion into mitochondrial inner membrane"/>
    <property type="evidence" value="ECO:0000318"/>
    <property type="project" value="GO_Central"/>
</dbReference>
<dbReference type="FunFam" id="1.10.287.810:FF:000002">
    <property type="entry name" value="Mitochondrial import inner membrane translocase subunit tim10"/>
    <property type="match status" value="1"/>
</dbReference>
<dbReference type="Gene3D" id="1.10.287.810">
    <property type="entry name" value="Mitochondrial import inner membrane translocase subunit tim13 like domains"/>
    <property type="match status" value="1"/>
</dbReference>
<dbReference type="InterPro" id="IPR004217">
    <property type="entry name" value="Tim10-like"/>
</dbReference>
<dbReference type="InterPro" id="IPR035427">
    <property type="entry name" value="Tim10-like_dom_sf"/>
</dbReference>
<dbReference type="PANTHER" id="PTHR11038">
    <property type="entry name" value="MITOCHONDRIAL IMPORT INNER MEMBRANE TRANSLOCASE SUBUNIT TIM10"/>
    <property type="match status" value="1"/>
</dbReference>
<dbReference type="PANTHER" id="PTHR11038:SF16">
    <property type="entry name" value="MITOCHONDRIAL IMPORT INNER MEMBRANE TRANSLOCASE SUBUNIT TIM10"/>
    <property type="match status" value="1"/>
</dbReference>
<dbReference type="Pfam" id="PF02953">
    <property type="entry name" value="zf-Tim10_DDP"/>
    <property type="match status" value="1"/>
</dbReference>
<dbReference type="SUPFAM" id="SSF144122">
    <property type="entry name" value="Tim10-like"/>
    <property type="match status" value="1"/>
</dbReference>
<evidence type="ECO:0000250" key="1"/>
<evidence type="ECO:0000305" key="2"/>